<protein>
    <recommendedName>
        <fullName evidence="1">Small ribosomal subunit protein uS4</fullName>
    </recommendedName>
    <alternativeName>
        <fullName evidence="2">30S ribosomal protein S4</fullName>
    </alternativeName>
</protein>
<accession>Q3YWW3</accession>
<feature type="chain" id="PRO_0000228926" description="Small ribosomal subunit protein uS4">
    <location>
        <begin position="1"/>
        <end position="206"/>
    </location>
</feature>
<feature type="domain" description="S4 RNA-binding" evidence="1">
    <location>
        <begin position="96"/>
        <end position="156"/>
    </location>
</feature>
<sequence length="206" mass="23469">MARYLGPKLKLSRREGTDLFLKSGVRAIDTKCKIEQAPGQHGARKPRLSDYGVQLREKQKVRRIYGVLERQFRNYYKEAARLKGNTGENLLALLEGRLDNVVYRMGFGATRAEARQLVSHKAIMVNGRVVNIASYQVSPNDVVSIREKAKKQSRVKAALELAEQREKPTWLEVDAGKMEGTFKRKPERSDLSADINEHLIVELYSK</sequence>
<comment type="function">
    <text evidence="1">One of the primary rRNA binding proteins, it binds directly to 16S rRNA where it nucleates assembly of the body of the 30S subunit.</text>
</comment>
<comment type="function">
    <text evidence="1">With S5 and S12 plays an important role in translational accuracy.</text>
</comment>
<comment type="subunit">
    <text evidence="1">Part of the 30S ribosomal subunit. Contacts protein S5. The interaction surface between S4 and S5 is involved in control of translational fidelity.</text>
</comment>
<comment type="similarity">
    <text evidence="1">Belongs to the universal ribosomal protein uS4 family.</text>
</comment>
<keyword id="KW-1185">Reference proteome</keyword>
<keyword id="KW-0687">Ribonucleoprotein</keyword>
<keyword id="KW-0689">Ribosomal protein</keyword>
<keyword id="KW-0694">RNA-binding</keyword>
<keyword id="KW-0699">rRNA-binding</keyword>
<reference key="1">
    <citation type="journal article" date="2005" name="Nucleic Acids Res.">
        <title>Genome dynamics and diversity of Shigella species, the etiologic agents of bacillary dysentery.</title>
        <authorList>
            <person name="Yang F."/>
            <person name="Yang J."/>
            <person name="Zhang X."/>
            <person name="Chen L."/>
            <person name="Jiang Y."/>
            <person name="Yan Y."/>
            <person name="Tang X."/>
            <person name="Wang J."/>
            <person name="Xiong Z."/>
            <person name="Dong J."/>
            <person name="Xue Y."/>
            <person name="Zhu Y."/>
            <person name="Xu X."/>
            <person name="Sun L."/>
            <person name="Chen S."/>
            <person name="Nie H."/>
            <person name="Peng J."/>
            <person name="Xu J."/>
            <person name="Wang Y."/>
            <person name="Yuan Z."/>
            <person name="Wen Y."/>
            <person name="Yao Z."/>
            <person name="Shen Y."/>
            <person name="Qiang B."/>
            <person name="Hou Y."/>
            <person name="Yu J."/>
            <person name="Jin Q."/>
        </authorList>
    </citation>
    <scope>NUCLEOTIDE SEQUENCE [LARGE SCALE GENOMIC DNA]</scope>
    <source>
        <strain>Ss046</strain>
    </source>
</reference>
<organism>
    <name type="scientific">Shigella sonnei (strain Ss046)</name>
    <dbReference type="NCBI Taxonomy" id="300269"/>
    <lineage>
        <taxon>Bacteria</taxon>
        <taxon>Pseudomonadati</taxon>
        <taxon>Pseudomonadota</taxon>
        <taxon>Gammaproteobacteria</taxon>
        <taxon>Enterobacterales</taxon>
        <taxon>Enterobacteriaceae</taxon>
        <taxon>Shigella</taxon>
    </lineage>
</organism>
<dbReference type="EMBL" id="CP000038">
    <property type="protein sequence ID" value="AAZ89999.1"/>
    <property type="molecule type" value="Genomic_DNA"/>
</dbReference>
<dbReference type="RefSeq" id="WP_000135224.1">
    <property type="nucleotide sequence ID" value="NC_007384.1"/>
</dbReference>
<dbReference type="SMR" id="Q3YWW3"/>
<dbReference type="GeneID" id="93778691"/>
<dbReference type="KEGG" id="ssn:SSON_3437"/>
<dbReference type="HOGENOM" id="CLU_092403_0_2_6"/>
<dbReference type="Proteomes" id="UP000002529">
    <property type="component" value="Chromosome"/>
</dbReference>
<dbReference type="GO" id="GO:0015935">
    <property type="term" value="C:small ribosomal subunit"/>
    <property type="evidence" value="ECO:0007669"/>
    <property type="project" value="InterPro"/>
</dbReference>
<dbReference type="GO" id="GO:0019843">
    <property type="term" value="F:rRNA binding"/>
    <property type="evidence" value="ECO:0007669"/>
    <property type="project" value="UniProtKB-UniRule"/>
</dbReference>
<dbReference type="GO" id="GO:0003735">
    <property type="term" value="F:structural constituent of ribosome"/>
    <property type="evidence" value="ECO:0007669"/>
    <property type="project" value="InterPro"/>
</dbReference>
<dbReference type="GO" id="GO:0042274">
    <property type="term" value="P:ribosomal small subunit biogenesis"/>
    <property type="evidence" value="ECO:0007669"/>
    <property type="project" value="TreeGrafter"/>
</dbReference>
<dbReference type="GO" id="GO:0006412">
    <property type="term" value="P:translation"/>
    <property type="evidence" value="ECO:0007669"/>
    <property type="project" value="UniProtKB-UniRule"/>
</dbReference>
<dbReference type="CDD" id="cd00165">
    <property type="entry name" value="S4"/>
    <property type="match status" value="1"/>
</dbReference>
<dbReference type="FunFam" id="1.10.1050.10:FF:000001">
    <property type="entry name" value="30S ribosomal protein S4"/>
    <property type="match status" value="1"/>
</dbReference>
<dbReference type="FunFam" id="3.10.290.10:FF:000001">
    <property type="entry name" value="30S ribosomal protein S4"/>
    <property type="match status" value="1"/>
</dbReference>
<dbReference type="Gene3D" id="1.10.1050.10">
    <property type="entry name" value="Ribosomal Protein S4 Delta 41, Chain A, domain 1"/>
    <property type="match status" value="1"/>
</dbReference>
<dbReference type="Gene3D" id="3.10.290.10">
    <property type="entry name" value="RNA-binding S4 domain"/>
    <property type="match status" value="1"/>
</dbReference>
<dbReference type="HAMAP" id="MF_01306_B">
    <property type="entry name" value="Ribosomal_uS4_B"/>
    <property type="match status" value="1"/>
</dbReference>
<dbReference type="InterPro" id="IPR022801">
    <property type="entry name" value="Ribosomal_uS4"/>
</dbReference>
<dbReference type="InterPro" id="IPR005709">
    <property type="entry name" value="Ribosomal_uS4_bac-type"/>
</dbReference>
<dbReference type="InterPro" id="IPR018079">
    <property type="entry name" value="Ribosomal_uS4_CS"/>
</dbReference>
<dbReference type="InterPro" id="IPR001912">
    <property type="entry name" value="Ribosomal_uS4_N"/>
</dbReference>
<dbReference type="InterPro" id="IPR002942">
    <property type="entry name" value="S4_RNA-bd"/>
</dbReference>
<dbReference type="InterPro" id="IPR036986">
    <property type="entry name" value="S4_RNA-bd_sf"/>
</dbReference>
<dbReference type="NCBIfam" id="NF003717">
    <property type="entry name" value="PRK05327.1"/>
    <property type="match status" value="1"/>
</dbReference>
<dbReference type="NCBIfam" id="TIGR01017">
    <property type="entry name" value="rpsD_bact"/>
    <property type="match status" value="1"/>
</dbReference>
<dbReference type="PANTHER" id="PTHR11831">
    <property type="entry name" value="30S 40S RIBOSOMAL PROTEIN"/>
    <property type="match status" value="1"/>
</dbReference>
<dbReference type="PANTHER" id="PTHR11831:SF4">
    <property type="entry name" value="SMALL RIBOSOMAL SUBUNIT PROTEIN US4M"/>
    <property type="match status" value="1"/>
</dbReference>
<dbReference type="Pfam" id="PF00163">
    <property type="entry name" value="Ribosomal_S4"/>
    <property type="match status" value="1"/>
</dbReference>
<dbReference type="Pfam" id="PF01479">
    <property type="entry name" value="S4"/>
    <property type="match status" value="1"/>
</dbReference>
<dbReference type="SMART" id="SM01390">
    <property type="entry name" value="Ribosomal_S4"/>
    <property type="match status" value="1"/>
</dbReference>
<dbReference type="SMART" id="SM00363">
    <property type="entry name" value="S4"/>
    <property type="match status" value="1"/>
</dbReference>
<dbReference type="SUPFAM" id="SSF55174">
    <property type="entry name" value="Alpha-L RNA-binding motif"/>
    <property type="match status" value="1"/>
</dbReference>
<dbReference type="PROSITE" id="PS00632">
    <property type="entry name" value="RIBOSOMAL_S4"/>
    <property type="match status" value="1"/>
</dbReference>
<dbReference type="PROSITE" id="PS50889">
    <property type="entry name" value="S4"/>
    <property type="match status" value="1"/>
</dbReference>
<gene>
    <name evidence="1" type="primary">rpsD</name>
    <name type="ordered locus">SSON_3437</name>
</gene>
<name>RS4_SHISS</name>
<evidence type="ECO:0000255" key="1">
    <source>
        <dbReference type="HAMAP-Rule" id="MF_01306"/>
    </source>
</evidence>
<evidence type="ECO:0000305" key="2"/>
<proteinExistence type="inferred from homology"/>